<keyword id="KW-0150">Chloroplast</keyword>
<keyword id="KW-0472">Membrane</keyword>
<keyword id="KW-0602">Photosynthesis</keyword>
<keyword id="KW-0603">Photosystem I</keyword>
<keyword id="KW-0934">Plastid</keyword>
<keyword id="KW-1185">Reference proteome</keyword>
<keyword id="KW-0793">Thylakoid</keyword>
<keyword id="KW-0812">Transmembrane</keyword>
<keyword id="KW-1133">Transmembrane helix</keyword>
<name>PSAI_SORBI</name>
<evidence type="ECO:0000255" key="1">
    <source>
        <dbReference type="HAMAP-Rule" id="MF_00431"/>
    </source>
</evidence>
<feature type="chain" id="PRO_0000276040" description="Photosystem I reaction center subunit VIII">
    <location>
        <begin position="1"/>
        <end position="36"/>
    </location>
</feature>
<feature type="transmembrane region" description="Helical" evidence="1">
    <location>
        <begin position="9"/>
        <end position="29"/>
    </location>
</feature>
<sequence length="36" mass="3994">MTDLNLPSIFVPLVGLVFPAIAMTSLFLYVQKNKIV</sequence>
<dbReference type="EMBL" id="EF115542">
    <property type="protein sequence ID" value="ABK79506.1"/>
    <property type="molecule type" value="Genomic_DNA"/>
</dbReference>
<dbReference type="RefSeq" id="YP_899417.1">
    <property type="nucleotide sequence ID" value="NC_008602.1"/>
</dbReference>
<dbReference type="SMR" id="A1E9T4"/>
<dbReference type="FunCoup" id="A1E9T4">
    <property type="interactions" value="31"/>
</dbReference>
<dbReference type="STRING" id="4558.A1E9T4"/>
<dbReference type="GeneID" id="4549169"/>
<dbReference type="KEGG" id="sbi:4549169"/>
<dbReference type="InParanoid" id="A1E9T4"/>
<dbReference type="OrthoDB" id="35618at2759"/>
<dbReference type="Proteomes" id="UP000000768">
    <property type="component" value="Chloroplast"/>
</dbReference>
<dbReference type="GO" id="GO:0009535">
    <property type="term" value="C:chloroplast thylakoid membrane"/>
    <property type="evidence" value="ECO:0007669"/>
    <property type="project" value="UniProtKB-SubCell"/>
</dbReference>
<dbReference type="GO" id="GO:0009522">
    <property type="term" value="C:photosystem I"/>
    <property type="evidence" value="ECO:0007669"/>
    <property type="project" value="UniProtKB-KW"/>
</dbReference>
<dbReference type="GO" id="GO:0015979">
    <property type="term" value="P:photosynthesis"/>
    <property type="evidence" value="ECO:0007669"/>
    <property type="project" value="UniProtKB-UniRule"/>
</dbReference>
<dbReference type="HAMAP" id="MF_00431">
    <property type="entry name" value="PSI_PsaI"/>
    <property type="match status" value="1"/>
</dbReference>
<dbReference type="InterPro" id="IPR001302">
    <property type="entry name" value="PSI_PsaI"/>
</dbReference>
<dbReference type="InterPro" id="IPR036357">
    <property type="entry name" value="PSI_PsaI_sf"/>
</dbReference>
<dbReference type="NCBIfam" id="TIGR03052">
    <property type="entry name" value="PS_I_psaI"/>
    <property type="match status" value="1"/>
</dbReference>
<dbReference type="PANTHER" id="PTHR35775">
    <property type="match status" value="1"/>
</dbReference>
<dbReference type="PANTHER" id="PTHR35775:SF2">
    <property type="entry name" value="PHOTOSYSTEM I REACTION CENTER SUBUNIT VIII"/>
    <property type="match status" value="1"/>
</dbReference>
<dbReference type="Pfam" id="PF00796">
    <property type="entry name" value="PSI_8"/>
    <property type="match status" value="1"/>
</dbReference>
<dbReference type="SUPFAM" id="SSF81540">
    <property type="entry name" value="Subunit VIII of photosystem I reaction centre, PsaI"/>
    <property type="match status" value="1"/>
</dbReference>
<gene>
    <name evidence="1" type="primary">psaI</name>
</gene>
<geneLocation type="chloroplast"/>
<organism>
    <name type="scientific">Sorghum bicolor</name>
    <name type="common">Sorghum</name>
    <name type="synonym">Sorghum vulgare</name>
    <dbReference type="NCBI Taxonomy" id="4558"/>
    <lineage>
        <taxon>Eukaryota</taxon>
        <taxon>Viridiplantae</taxon>
        <taxon>Streptophyta</taxon>
        <taxon>Embryophyta</taxon>
        <taxon>Tracheophyta</taxon>
        <taxon>Spermatophyta</taxon>
        <taxon>Magnoliopsida</taxon>
        <taxon>Liliopsida</taxon>
        <taxon>Poales</taxon>
        <taxon>Poaceae</taxon>
        <taxon>PACMAD clade</taxon>
        <taxon>Panicoideae</taxon>
        <taxon>Andropogonodae</taxon>
        <taxon>Andropogoneae</taxon>
        <taxon>Sorghinae</taxon>
        <taxon>Sorghum</taxon>
    </lineage>
</organism>
<reference key="1">
    <citation type="journal article" date="2007" name="Theor. Appl. Genet.">
        <title>Complete chloroplast genome sequences of Hordeum vulgare, Sorghum bicolor and Agrostis stolonifera, and comparative analyses with other grass genomes.</title>
        <authorList>
            <person name="Saski C."/>
            <person name="Lee S.-B."/>
            <person name="Fjellheim S."/>
            <person name="Guda C."/>
            <person name="Jansen R.K."/>
            <person name="Luo H."/>
            <person name="Tomkins J."/>
            <person name="Rognli O.A."/>
            <person name="Daniell H."/>
            <person name="Clarke J.L."/>
        </authorList>
    </citation>
    <scope>NUCLEOTIDE SEQUENCE [LARGE SCALE GENOMIC DNA]</scope>
    <source>
        <strain>cv. BTx623</strain>
    </source>
</reference>
<accession>A1E9T4</accession>
<protein>
    <recommendedName>
        <fullName evidence="1">Photosystem I reaction center subunit VIII</fullName>
        <shortName evidence="1">PSI-I</shortName>
    </recommendedName>
</protein>
<proteinExistence type="inferred from homology"/>
<comment type="function">
    <text evidence="1">May help in the organization of the PsaL subunit.</text>
</comment>
<comment type="subcellular location">
    <subcellularLocation>
        <location evidence="1">Plastid</location>
        <location evidence="1">Chloroplast thylakoid membrane</location>
        <topology evidence="1">Single-pass membrane protein</topology>
    </subcellularLocation>
</comment>
<comment type="similarity">
    <text evidence="1">Belongs to the PsaI family.</text>
</comment>